<reference key="1">
    <citation type="submission" date="2008-04" db="EMBL/GenBank/DDBJ databases">
        <title>Complete sequence of chromosome of Natranaerobius thermophilus JW/NM-WN-LF.</title>
        <authorList>
            <consortium name="US DOE Joint Genome Institute"/>
            <person name="Copeland A."/>
            <person name="Lucas S."/>
            <person name="Lapidus A."/>
            <person name="Glavina del Rio T."/>
            <person name="Dalin E."/>
            <person name="Tice H."/>
            <person name="Bruce D."/>
            <person name="Goodwin L."/>
            <person name="Pitluck S."/>
            <person name="Chertkov O."/>
            <person name="Brettin T."/>
            <person name="Detter J.C."/>
            <person name="Han C."/>
            <person name="Kuske C.R."/>
            <person name="Schmutz J."/>
            <person name="Larimer F."/>
            <person name="Land M."/>
            <person name="Hauser L."/>
            <person name="Kyrpides N."/>
            <person name="Lykidis A."/>
            <person name="Mesbah N.M."/>
            <person name="Wiegel J."/>
        </authorList>
    </citation>
    <scope>NUCLEOTIDE SEQUENCE [LARGE SCALE GENOMIC DNA]</scope>
    <source>
        <strain>ATCC BAA-1301 / DSM 18059 / JW/NM-WN-LF</strain>
    </source>
</reference>
<evidence type="ECO:0000255" key="1">
    <source>
        <dbReference type="HAMAP-Rule" id="MF_00054"/>
    </source>
</evidence>
<comment type="function">
    <text evidence="1">Catalyzes the GTP-dependent ribosomal translocation step during translation elongation. During this step, the ribosome changes from the pre-translocational (PRE) to the post-translocational (POST) state as the newly formed A-site-bound peptidyl-tRNA and P-site-bound deacylated tRNA move to the P and E sites, respectively. Catalyzes the coordinated movement of the two tRNA molecules, the mRNA and conformational changes in the ribosome.</text>
</comment>
<comment type="subcellular location">
    <subcellularLocation>
        <location evidence="1">Cytoplasm</location>
    </subcellularLocation>
</comment>
<comment type="similarity">
    <text evidence="1">Belongs to the TRAFAC class translation factor GTPase superfamily. Classic translation factor GTPase family. EF-G/EF-2 subfamily.</text>
</comment>
<dbReference type="EMBL" id="CP001034">
    <property type="protein sequence ID" value="ACB83790.1"/>
    <property type="molecule type" value="Genomic_DNA"/>
</dbReference>
<dbReference type="RefSeq" id="WP_012446680.1">
    <property type="nucleotide sequence ID" value="NC_010718.1"/>
</dbReference>
<dbReference type="SMR" id="B2A4D6"/>
<dbReference type="FunCoup" id="B2A4D6">
    <property type="interactions" value="442"/>
</dbReference>
<dbReference type="STRING" id="457570.Nther_0191"/>
<dbReference type="KEGG" id="nth:Nther_0191"/>
<dbReference type="eggNOG" id="COG0480">
    <property type="taxonomic scope" value="Bacteria"/>
</dbReference>
<dbReference type="HOGENOM" id="CLU_002794_4_1_9"/>
<dbReference type="InParanoid" id="B2A4D6"/>
<dbReference type="OrthoDB" id="9804431at2"/>
<dbReference type="Proteomes" id="UP000001683">
    <property type="component" value="Chromosome"/>
</dbReference>
<dbReference type="GO" id="GO:0005737">
    <property type="term" value="C:cytoplasm"/>
    <property type="evidence" value="ECO:0007669"/>
    <property type="project" value="UniProtKB-SubCell"/>
</dbReference>
<dbReference type="GO" id="GO:0005525">
    <property type="term" value="F:GTP binding"/>
    <property type="evidence" value="ECO:0007669"/>
    <property type="project" value="UniProtKB-UniRule"/>
</dbReference>
<dbReference type="GO" id="GO:0003924">
    <property type="term" value="F:GTPase activity"/>
    <property type="evidence" value="ECO:0007669"/>
    <property type="project" value="InterPro"/>
</dbReference>
<dbReference type="GO" id="GO:0003746">
    <property type="term" value="F:translation elongation factor activity"/>
    <property type="evidence" value="ECO:0007669"/>
    <property type="project" value="UniProtKB-UniRule"/>
</dbReference>
<dbReference type="GO" id="GO:0032790">
    <property type="term" value="P:ribosome disassembly"/>
    <property type="evidence" value="ECO:0007669"/>
    <property type="project" value="TreeGrafter"/>
</dbReference>
<dbReference type="CDD" id="cd01886">
    <property type="entry name" value="EF-G"/>
    <property type="match status" value="1"/>
</dbReference>
<dbReference type="CDD" id="cd16262">
    <property type="entry name" value="EFG_III"/>
    <property type="match status" value="1"/>
</dbReference>
<dbReference type="CDD" id="cd01434">
    <property type="entry name" value="EFG_mtEFG1_IV"/>
    <property type="match status" value="1"/>
</dbReference>
<dbReference type="CDD" id="cd03713">
    <property type="entry name" value="EFG_mtEFG_C"/>
    <property type="match status" value="1"/>
</dbReference>
<dbReference type="CDD" id="cd04088">
    <property type="entry name" value="EFG_mtEFG_II"/>
    <property type="match status" value="1"/>
</dbReference>
<dbReference type="FunFam" id="2.40.30.10:FF:000006">
    <property type="entry name" value="Elongation factor G"/>
    <property type="match status" value="1"/>
</dbReference>
<dbReference type="FunFam" id="3.30.230.10:FF:000003">
    <property type="entry name" value="Elongation factor G"/>
    <property type="match status" value="1"/>
</dbReference>
<dbReference type="FunFam" id="3.30.70.240:FF:000001">
    <property type="entry name" value="Elongation factor G"/>
    <property type="match status" value="1"/>
</dbReference>
<dbReference type="FunFam" id="3.30.70.870:FF:000001">
    <property type="entry name" value="Elongation factor G"/>
    <property type="match status" value="1"/>
</dbReference>
<dbReference type="FunFam" id="3.40.50.300:FF:000029">
    <property type="entry name" value="Elongation factor G"/>
    <property type="match status" value="1"/>
</dbReference>
<dbReference type="Gene3D" id="3.30.230.10">
    <property type="match status" value="1"/>
</dbReference>
<dbReference type="Gene3D" id="3.30.70.240">
    <property type="match status" value="1"/>
</dbReference>
<dbReference type="Gene3D" id="3.30.70.870">
    <property type="entry name" value="Elongation Factor G (Translational Gtpase), domain 3"/>
    <property type="match status" value="1"/>
</dbReference>
<dbReference type="Gene3D" id="3.40.50.300">
    <property type="entry name" value="P-loop containing nucleotide triphosphate hydrolases"/>
    <property type="match status" value="1"/>
</dbReference>
<dbReference type="Gene3D" id="2.40.30.10">
    <property type="entry name" value="Translation factors"/>
    <property type="match status" value="1"/>
</dbReference>
<dbReference type="HAMAP" id="MF_00054_B">
    <property type="entry name" value="EF_G_EF_2_B"/>
    <property type="match status" value="1"/>
</dbReference>
<dbReference type="InterPro" id="IPR041095">
    <property type="entry name" value="EFG_II"/>
</dbReference>
<dbReference type="InterPro" id="IPR009022">
    <property type="entry name" value="EFG_III"/>
</dbReference>
<dbReference type="InterPro" id="IPR035647">
    <property type="entry name" value="EFG_III/V"/>
</dbReference>
<dbReference type="InterPro" id="IPR047872">
    <property type="entry name" value="EFG_IV"/>
</dbReference>
<dbReference type="InterPro" id="IPR035649">
    <property type="entry name" value="EFG_V"/>
</dbReference>
<dbReference type="InterPro" id="IPR000640">
    <property type="entry name" value="EFG_V-like"/>
</dbReference>
<dbReference type="InterPro" id="IPR004161">
    <property type="entry name" value="EFTu-like_2"/>
</dbReference>
<dbReference type="InterPro" id="IPR031157">
    <property type="entry name" value="G_TR_CS"/>
</dbReference>
<dbReference type="InterPro" id="IPR027417">
    <property type="entry name" value="P-loop_NTPase"/>
</dbReference>
<dbReference type="InterPro" id="IPR020568">
    <property type="entry name" value="Ribosomal_Su5_D2-typ_SF"/>
</dbReference>
<dbReference type="InterPro" id="IPR014721">
    <property type="entry name" value="Ribsml_uS5_D2-typ_fold_subgr"/>
</dbReference>
<dbReference type="InterPro" id="IPR005225">
    <property type="entry name" value="Small_GTP-bd"/>
</dbReference>
<dbReference type="InterPro" id="IPR000795">
    <property type="entry name" value="T_Tr_GTP-bd_dom"/>
</dbReference>
<dbReference type="InterPro" id="IPR009000">
    <property type="entry name" value="Transl_B-barrel_sf"/>
</dbReference>
<dbReference type="InterPro" id="IPR004540">
    <property type="entry name" value="Transl_elong_EFG/EF2"/>
</dbReference>
<dbReference type="InterPro" id="IPR005517">
    <property type="entry name" value="Transl_elong_EFG/EF2_IV"/>
</dbReference>
<dbReference type="NCBIfam" id="TIGR00484">
    <property type="entry name" value="EF-G"/>
    <property type="match status" value="1"/>
</dbReference>
<dbReference type="NCBIfam" id="NF009379">
    <property type="entry name" value="PRK12740.1-3"/>
    <property type="match status" value="1"/>
</dbReference>
<dbReference type="NCBIfam" id="NF009381">
    <property type="entry name" value="PRK12740.1-5"/>
    <property type="match status" value="1"/>
</dbReference>
<dbReference type="NCBIfam" id="NF009891">
    <property type="entry name" value="PRK13351.1-1"/>
    <property type="match status" value="1"/>
</dbReference>
<dbReference type="NCBIfam" id="TIGR00231">
    <property type="entry name" value="small_GTP"/>
    <property type="match status" value="1"/>
</dbReference>
<dbReference type="PANTHER" id="PTHR43261:SF1">
    <property type="entry name" value="RIBOSOME-RELEASING FACTOR 2, MITOCHONDRIAL"/>
    <property type="match status" value="1"/>
</dbReference>
<dbReference type="PANTHER" id="PTHR43261">
    <property type="entry name" value="TRANSLATION ELONGATION FACTOR G-RELATED"/>
    <property type="match status" value="1"/>
</dbReference>
<dbReference type="Pfam" id="PF00679">
    <property type="entry name" value="EFG_C"/>
    <property type="match status" value="1"/>
</dbReference>
<dbReference type="Pfam" id="PF14492">
    <property type="entry name" value="EFG_III"/>
    <property type="match status" value="1"/>
</dbReference>
<dbReference type="Pfam" id="PF03764">
    <property type="entry name" value="EFG_IV"/>
    <property type="match status" value="1"/>
</dbReference>
<dbReference type="Pfam" id="PF00009">
    <property type="entry name" value="GTP_EFTU"/>
    <property type="match status" value="1"/>
</dbReference>
<dbReference type="Pfam" id="PF03144">
    <property type="entry name" value="GTP_EFTU_D2"/>
    <property type="match status" value="1"/>
</dbReference>
<dbReference type="PRINTS" id="PR00315">
    <property type="entry name" value="ELONGATNFCT"/>
</dbReference>
<dbReference type="SMART" id="SM00838">
    <property type="entry name" value="EFG_C"/>
    <property type="match status" value="1"/>
</dbReference>
<dbReference type="SMART" id="SM00889">
    <property type="entry name" value="EFG_IV"/>
    <property type="match status" value="1"/>
</dbReference>
<dbReference type="SUPFAM" id="SSF54980">
    <property type="entry name" value="EF-G C-terminal domain-like"/>
    <property type="match status" value="2"/>
</dbReference>
<dbReference type="SUPFAM" id="SSF52540">
    <property type="entry name" value="P-loop containing nucleoside triphosphate hydrolases"/>
    <property type="match status" value="1"/>
</dbReference>
<dbReference type="SUPFAM" id="SSF54211">
    <property type="entry name" value="Ribosomal protein S5 domain 2-like"/>
    <property type="match status" value="1"/>
</dbReference>
<dbReference type="SUPFAM" id="SSF50447">
    <property type="entry name" value="Translation proteins"/>
    <property type="match status" value="1"/>
</dbReference>
<dbReference type="PROSITE" id="PS00301">
    <property type="entry name" value="G_TR_1"/>
    <property type="match status" value="1"/>
</dbReference>
<dbReference type="PROSITE" id="PS51722">
    <property type="entry name" value="G_TR_2"/>
    <property type="match status" value="1"/>
</dbReference>
<accession>B2A4D6</accession>
<name>EFG_NATTJ</name>
<proteinExistence type="inferred from homology"/>
<protein>
    <recommendedName>
        <fullName evidence="1">Elongation factor G</fullName>
        <shortName evidence="1">EF-G</shortName>
    </recommendedName>
</protein>
<organism>
    <name type="scientific">Natranaerobius thermophilus (strain ATCC BAA-1301 / DSM 18059 / JW/NM-WN-LF)</name>
    <dbReference type="NCBI Taxonomy" id="457570"/>
    <lineage>
        <taxon>Bacteria</taxon>
        <taxon>Bacillati</taxon>
        <taxon>Bacillota</taxon>
        <taxon>Clostridia</taxon>
        <taxon>Natranaerobiales</taxon>
        <taxon>Natranaerobiaceae</taxon>
        <taxon>Natranaerobius</taxon>
    </lineage>
</organism>
<feature type="chain" id="PRO_1000091739" description="Elongation factor G">
    <location>
        <begin position="1"/>
        <end position="691"/>
    </location>
</feature>
<feature type="domain" description="tr-type G">
    <location>
        <begin position="8"/>
        <end position="282"/>
    </location>
</feature>
<feature type="binding site" evidence="1">
    <location>
        <begin position="17"/>
        <end position="24"/>
    </location>
    <ligand>
        <name>GTP</name>
        <dbReference type="ChEBI" id="CHEBI:37565"/>
    </ligand>
</feature>
<feature type="binding site" evidence="1">
    <location>
        <begin position="81"/>
        <end position="85"/>
    </location>
    <ligand>
        <name>GTP</name>
        <dbReference type="ChEBI" id="CHEBI:37565"/>
    </ligand>
</feature>
<feature type="binding site" evidence="1">
    <location>
        <begin position="135"/>
        <end position="138"/>
    </location>
    <ligand>
        <name>GTP</name>
        <dbReference type="ChEBI" id="CHEBI:37565"/>
    </ligand>
</feature>
<sequence length="691" mass="77426">MTRKFPLEQTRNIGIMAHIDAGKTTTTERILFYTGRVHKLGETHDGASTMDFMDQEQERGITITSAATTCQWRDTRVNIIDTPGHVDFTVEVERSLRVLDGAIGVFCAKGGVEPQSETVWHQADRYHVPRIAYINKMDIMGADFYNVVDMMNERLQANPVPIQLPIGKEDDFQGIVDLIKNTAVIYKDDLGTEWEEVEIPEDMQELAEEYRDKMLEMAAEYDEELMMKYLEGEEITSEEIRLALREGCLKTELTPVLCGSSYKNKGVQMLLNAVIDYLPAPTDVPPIEGVVPGKEDEEEKEQRVSSDDEPFSALAFKIVTDPYVGKLCFFRVYSGKIEAGSYVYNPVKGKKERVGRILQMHANHREERNVVYTGDIAAAVGLKNTSTGETLCSPEKPIVLESMQFPEPVISVAIEPKTRADQEKMATSLQKLSEEDPTFQTHTDDETGQTIIKGMGELHLEVIVDRLLREFKVEANVGKPQVAYKETIKAPTKSEGKFIRQSGGRGQYGHVLIEMEPLERGAGYEFEDKIVGGVIPKEYIPAVDNGIQEAMQNGVLAGYPMVDVKITLYDGSYHEVDSNESAFKIAGSMAFKDGSKKASPVILEPIMKVEIVVPEEYMGDVMGDVNSRRGRIEGMEERSGSRLIRSYVPLAEMFGYATQLRSTTQGRGTYTMEFSHYDEVPDSIAKELMDV</sequence>
<gene>
    <name evidence="1" type="primary">fusA</name>
    <name type="ordered locus">Nther_0191</name>
</gene>
<keyword id="KW-0963">Cytoplasm</keyword>
<keyword id="KW-0251">Elongation factor</keyword>
<keyword id="KW-0342">GTP-binding</keyword>
<keyword id="KW-0547">Nucleotide-binding</keyword>
<keyword id="KW-0648">Protein biosynthesis</keyword>
<keyword id="KW-1185">Reference proteome</keyword>